<feature type="chain" id="PRO_1000086074" description="Small ribosomal subunit protein uS5">
    <location>
        <begin position="1"/>
        <end position="167"/>
    </location>
</feature>
<feature type="domain" description="S5 DRBM" evidence="1">
    <location>
        <begin position="11"/>
        <end position="74"/>
    </location>
</feature>
<keyword id="KW-0687">Ribonucleoprotein</keyword>
<keyword id="KW-0689">Ribosomal protein</keyword>
<keyword id="KW-0694">RNA-binding</keyword>
<keyword id="KW-0699">rRNA-binding</keyword>
<protein>
    <recommendedName>
        <fullName evidence="1">Small ribosomal subunit protein uS5</fullName>
    </recommendedName>
    <alternativeName>
        <fullName evidence="2">30S ribosomal protein S5</fullName>
    </alternativeName>
</protein>
<sequence>MSHIEKQAGELQEKLIAVNRVSKTVKGGRIFSFTALTVVGDGNGRVGFGYGKAREVPAAIQKAMEKARRAMINVALDNGTLQHPVKGAHTGSRVFMQPASEGTGIIAGGAMRAVLEVAGVHNVLAKAYGSTNPINVVRATIAALEDMKSPEMVAAKRGKSVEEILGK</sequence>
<accession>A1JS11</accession>
<evidence type="ECO:0000255" key="1">
    <source>
        <dbReference type="HAMAP-Rule" id="MF_01307"/>
    </source>
</evidence>
<evidence type="ECO:0000305" key="2"/>
<reference key="1">
    <citation type="journal article" date="2006" name="PLoS Genet.">
        <title>The complete genome sequence and comparative genome analysis of the high pathogenicity Yersinia enterocolitica strain 8081.</title>
        <authorList>
            <person name="Thomson N.R."/>
            <person name="Howard S."/>
            <person name="Wren B.W."/>
            <person name="Holden M.T.G."/>
            <person name="Crossman L."/>
            <person name="Challis G.L."/>
            <person name="Churcher C."/>
            <person name="Mungall K."/>
            <person name="Brooks K."/>
            <person name="Chillingworth T."/>
            <person name="Feltwell T."/>
            <person name="Abdellah Z."/>
            <person name="Hauser H."/>
            <person name="Jagels K."/>
            <person name="Maddison M."/>
            <person name="Moule S."/>
            <person name="Sanders M."/>
            <person name="Whitehead S."/>
            <person name="Quail M.A."/>
            <person name="Dougan G."/>
            <person name="Parkhill J."/>
            <person name="Prentice M.B."/>
        </authorList>
    </citation>
    <scope>NUCLEOTIDE SEQUENCE [LARGE SCALE GENOMIC DNA]</scope>
    <source>
        <strain>NCTC 13174 / 8081</strain>
    </source>
</reference>
<dbReference type="EMBL" id="AM286415">
    <property type="protein sequence ID" value="CAL13925.1"/>
    <property type="molecule type" value="Genomic_DNA"/>
</dbReference>
<dbReference type="RefSeq" id="WP_004391412.1">
    <property type="nucleotide sequence ID" value="NC_008800.1"/>
</dbReference>
<dbReference type="RefSeq" id="YP_001008051.1">
    <property type="nucleotide sequence ID" value="NC_008800.1"/>
</dbReference>
<dbReference type="SMR" id="A1JS11"/>
<dbReference type="GeneID" id="97454248"/>
<dbReference type="KEGG" id="yen:YE3906"/>
<dbReference type="PATRIC" id="fig|393305.7.peg.4156"/>
<dbReference type="eggNOG" id="COG0098">
    <property type="taxonomic scope" value="Bacteria"/>
</dbReference>
<dbReference type="HOGENOM" id="CLU_065898_2_2_6"/>
<dbReference type="OrthoDB" id="9809045at2"/>
<dbReference type="Proteomes" id="UP000000642">
    <property type="component" value="Chromosome"/>
</dbReference>
<dbReference type="GO" id="GO:0015935">
    <property type="term" value="C:small ribosomal subunit"/>
    <property type="evidence" value="ECO:0007669"/>
    <property type="project" value="InterPro"/>
</dbReference>
<dbReference type="GO" id="GO:0019843">
    <property type="term" value="F:rRNA binding"/>
    <property type="evidence" value="ECO:0007669"/>
    <property type="project" value="UniProtKB-UniRule"/>
</dbReference>
<dbReference type="GO" id="GO:0003735">
    <property type="term" value="F:structural constituent of ribosome"/>
    <property type="evidence" value="ECO:0007669"/>
    <property type="project" value="InterPro"/>
</dbReference>
<dbReference type="GO" id="GO:0006412">
    <property type="term" value="P:translation"/>
    <property type="evidence" value="ECO:0007669"/>
    <property type="project" value="UniProtKB-UniRule"/>
</dbReference>
<dbReference type="FunFam" id="3.30.160.20:FF:000001">
    <property type="entry name" value="30S ribosomal protein S5"/>
    <property type="match status" value="1"/>
</dbReference>
<dbReference type="FunFam" id="3.30.230.10:FF:000002">
    <property type="entry name" value="30S ribosomal protein S5"/>
    <property type="match status" value="1"/>
</dbReference>
<dbReference type="Gene3D" id="3.30.160.20">
    <property type="match status" value="1"/>
</dbReference>
<dbReference type="Gene3D" id="3.30.230.10">
    <property type="match status" value="1"/>
</dbReference>
<dbReference type="HAMAP" id="MF_01307_B">
    <property type="entry name" value="Ribosomal_uS5_B"/>
    <property type="match status" value="1"/>
</dbReference>
<dbReference type="InterPro" id="IPR020568">
    <property type="entry name" value="Ribosomal_Su5_D2-typ_SF"/>
</dbReference>
<dbReference type="InterPro" id="IPR000851">
    <property type="entry name" value="Ribosomal_uS5"/>
</dbReference>
<dbReference type="InterPro" id="IPR005712">
    <property type="entry name" value="Ribosomal_uS5_bac-type"/>
</dbReference>
<dbReference type="InterPro" id="IPR005324">
    <property type="entry name" value="Ribosomal_uS5_C"/>
</dbReference>
<dbReference type="InterPro" id="IPR013810">
    <property type="entry name" value="Ribosomal_uS5_N"/>
</dbReference>
<dbReference type="InterPro" id="IPR018192">
    <property type="entry name" value="Ribosomal_uS5_N_CS"/>
</dbReference>
<dbReference type="InterPro" id="IPR014721">
    <property type="entry name" value="Ribsml_uS5_D2-typ_fold_subgr"/>
</dbReference>
<dbReference type="NCBIfam" id="TIGR01021">
    <property type="entry name" value="rpsE_bact"/>
    <property type="match status" value="1"/>
</dbReference>
<dbReference type="PANTHER" id="PTHR48277">
    <property type="entry name" value="MITOCHONDRIAL RIBOSOMAL PROTEIN S5"/>
    <property type="match status" value="1"/>
</dbReference>
<dbReference type="PANTHER" id="PTHR48277:SF1">
    <property type="entry name" value="MITOCHONDRIAL RIBOSOMAL PROTEIN S5"/>
    <property type="match status" value="1"/>
</dbReference>
<dbReference type="Pfam" id="PF00333">
    <property type="entry name" value="Ribosomal_S5"/>
    <property type="match status" value="1"/>
</dbReference>
<dbReference type="Pfam" id="PF03719">
    <property type="entry name" value="Ribosomal_S5_C"/>
    <property type="match status" value="1"/>
</dbReference>
<dbReference type="SUPFAM" id="SSF54768">
    <property type="entry name" value="dsRNA-binding domain-like"/>
    <property type="match status" value="1"/>
</dbReference>
<dbReference type="SUPFAM" id="SSF54211">
    <property type="entry name" value="Ribosomal protein S5 domain 2-like"/>
    <property type="match status" value="1"/>
</dbReference>
<dbReference type="PROSITE" id="PS00585">
    <property type="entry name" value="RIBOSOMAL_S5"/>
    <property type="match status" value="1"/>
</dbReference>
<dbReference type="PROSITE" id="PS50881">
    <property type="entry name" value="S5_DSRBD"/>
    <property type="match status" value="1"/>
</dbReference>
<proteinExistence type="inferred from homology"/>
<gene>
    <name evidence="1" type="primary">rpsE</name>
    <name type="ordered locus">YE3906</name>
</gene>
<comment type="function">
    <text evidence="1">With S4 and S12 plays an important role in translational accuracy.</text>
</comment>
<comment type="function">
    <text evidence="1">Located at the back of the 30S subunit body where it stabilizes the conformation of the head with respect to the body.</text>
</comment>
<comment type="subunit">
    <text evidence="1">Part of the 30S ribosomal subunit. Contacts proteins S4 and S8.</text>
</comment>
<comment type="domain">
    <text>The N-terminal domain interacts with the head of the 30S subunit; the C-terminal domain interacts with the body and contacts protein S4. The interaction surface between S4 and S5 is involved in control of translational fidelity.</text>
</comment>
<comment type="similarity">
    <text evidence="1">Belongs to the universal ribosomal protein uS5 family.</text>
</comment>
<name>RS5_YERE8</name>
<organism>
    <name type="scientific">Yersinia enterocolitica serotype O:8 / biotype 1B (strain NCTC 13174 / 8081)</name>
    <dbReference type="NCBI Taxonomy" id="393305"/>
    <lineage>
        <taxon>Bacteria</taxon>
        <taxon>Pseudomonadati</taxon>
        <taxon>Pseudomonadota</taxon>
        <taxon>Gammaproteobacteria</taxon>
        <taxon>Enterobacterales</taxon>
        <taxon>Yersiniaceae</taxon>
        <taxon>Yersinia</taxon>
    </lineage>
</organism>